<gene>
    <name evidence="7" type="primary">Hacd4</name>
    <name evidence="6" type="synonym">Ptplad2</name>
</gene>
<feature type="chain" id="PRO_0000313731" description="Very-long-chain (3R)-3-hydroxyacyl-CoA dehydratase 4">
    <location>
        <begin position="1"/>
        <end position="232"/>
    </location>
</feature>
<feature type="topological domain" description="Cytoplasmic" evidence="4">
    <location>
        <begin position="1"/>
        <end position="19"/>
    </location>
</feature>
<feature type="transmembrane region" description="Helical" evidence="4">
    <location>
        <begin position="20"/>
        <end position="40"/>
    </location>
</feature>
<feature type="topological domain" description="Lumenal" evidence="4">
    <location>
        <begin position="41"/>
        <end position="56"/>
    </location>
</feature>
<feature type="transmembrane region" description="Helical" evidence="4">
    <location>
        <begin position="57"/>
        <end position="77"/>
    </location>
</feature>
<feature type="topological domain" description="Cytoplasmic" evidence="4">
    <location>
        <begin position="78"/>
        <end position="112"/>
    </location>
</feature>
<feature type="transmembrane region" description="Helical" evidence="4">
    <location>
        <begin position="113"/>
        <end position="133"/>
    </location>
</feature>
<feature type="topological domain" description="Lumenal" evidence="4">
    <location>
        <begin position="134"/>
        <end position="135"/>
    </location>
</feature>
<feature type="transmembrane region" description="Helical" evidence="4">
    <location>
        <begin position="136"/>
        <end position="156"/>
    </location>
</feature>
<feature type="topological domain" description="Cytoplasmic" evidence="4">
    <location>
        <position position="157"/>
    </location>
</feature>
<feature type="transmembrane region" description="Helical" evidence="4">
    <location>
        <begin position="158"/>
        <end position="178"/>
    </location>
</feature>
<feature type="topological domain" description="Lumenal" evidence="4">
    <location>
        <begin position="179"/>
        <end position="189"/>
    </location>
</feature>
<feature type="transmembrane region" description="Helical" evidence="4">
    <location>
        <begin position="190"/>
        <end position="210"/>
    </location>
</feature>
<feature type="topological domain" description="Cytoplasmic" evidence="4">
    <location>
        <begin position="211"/>
        <end position="232"/>
    </location>
</feature>
<feature type="active site" evidence="1">
    <location>
        <position position="156"/>
    </location>
</feature>
<feature type="active site" evidence="1">
    <location>
        <position position="163"/>
    </location>
</feature>
<feature type="splice variant" id="VSP_030124" description="In isoform 2." evidence="5">
    <original>MYFTYSHLYTERKDFLRVFSVKQKNV</original>
    <variation>NAKMFLIKCKKLCLKVFHSPIHLLHVLNTGHTTRPTTRPDI</variation>
    <location>
        <begin position="207"/>
        <end position="232"/>
    </location>
</feature>
<protein>
    <recommendedName>
        <fullName evidence="6">Very-long-chain (3R)-3-hydroxyacyl-CoA dehydratase 4</fullName>
        <ecNumber evidence="3">4.2.1.134</ecNumber>
    </recommendedName>
    <alternativeName>
        <fullName evidence="6">3-hydroxyacyl-CoA dehydratase 4</fullName>
        <shortName evidence="6">HACD4</shortName>
    </alternativeName>
    <alternativeName>
        <fullName evidence="6">Protein-tyrosine phosphatase-like A domain-containing protein 2</fullName>
    </alternativeName>
</protein>
<name>HACD4_MOUSE</name>
<accession>A2AKM2</accession>
<accession>A2AKM1</accession>
<accession>Q8BG85</accession>
<accession>Q9CPS2</accession>
<organism>
    <name type="scientific">Mus musculus</name>
    <name type="common">Mouse</name>
    <dbReference type="NCBI Taxonomy" id="10090"/>
    <lineage>
        <taxon>Eukaryota</taxon>
        <taxon>Metazoa</taxon>
        <taxon>Chordata</taxon>
        <taxon>Craniata</taxon>
        <taxon>Vertebrata</taxon>
        <taxon>Euteleostomi</taxon>
        <taxon>Mammalia</taxon>
        <taxon>Eutheria</taxon>
        <taxon>Euarchontoglires</taxon>
        <taxon>Glires</taxon>
        <taxon>Rodentia</taxon>
        <taxon>Myomorpha</taxon>
        <taxon>Muroidea</taxon>
        <taxon>Muridae</taxon>
        <taxon>Murinae</taxon>
        <taxon>Mus</taxon>
        <taxon>Mus</taxon>
    </lineage>
</organism>
<sequence>MGPSVLPAWLQPRYRKNVYLFIYYLIQFCGHSWILANMTVRFFSFGKDSMADTFYAIGLVMRVCQSISLLELLHIYIGIESNQLFPRFLQLTERVIILFGVITSQEEVQEKCVVCVLFILWNLLDMVRYTYSMLSVIGTSYAALTWLSQTLWMPIYPLCVLAEAFTIYQSLPYFESFGTNSTVLPFDLSTCFPYVLKLYLMMLFIGMYFTYSHLYTERKDFLRVFSVKQKNV</sequence>
<comment type="function">
    <text evidence="2">Catalyzes the third of the four reactions of the long-chain fatty acids elongation cycle. This endoplasmic reticulum-bound enzymatic process, allows the addition of two carbons to the chain of long- and very long-chain fatty acids/VLCFAs per cycle. This enzyme catalyzes the dehydration of the 3-hydroxyacyl-CoA intermediate into trans-2,3-enoyl-CoA, within each cycle of fatty acid elongation. Thereby, it participates in the production of VLCFAs of different chain lengths that are involved in multiple biological processes as precursors of membrane lipids and lipid mediators.</text>
</comment>
<comment type="catalytic activity">
    <reaction evidence="2">
        <text>a very-long-chain (3R)-3-hydroxyacyl-CoA = a very-long-chain (2E)-enoyl-CoA + H2O</text>
        <dbReference type="Rhea" id="RHEA:45812"/>
        <dbReference type="ChEBI" id="CHEBI:15377"/>
        <dbReference type="ChEBI" id="CHEBI:83728"/>
        <dbReference type="ChEBI" id="CHEBI:85440"/>
        <dbReference type="EC" id="4.2.1.134"/>
    </reaction>
    <physiologicalReaction direction="left-to-right" evidence="2">
        <dbReference type="Rhea" id="RHEA:45813"/>
    </physiologicalReaction>
</comment>
<comment type="catalytic activity">
    <reaction evidence="2">
        <text>(3R)-hydroxyhexadecanoyl-CoA = (2E)-hexadecenoyl-CoA + H2O</text>
        <dbReference type="Rhea" id="RHEA:39159"/>
        <dbReference type="ChEBI" id="CHEBI:15377"/>
        <dbReference type="ChEBI" id="CHEBI:61526"/>
        <dbReference type="ChEBI" id="CHEBI:74278"/>
    </reaction>
    <physiologicalReaction direction="left-to-right" evidence="2">
        <dbReference type="Rhea" id="RHEA:39160"/>
    </physiologicalReaction>
</comment>
<comment type="pathway">
    <text evidence="2">Lipid metabolism; fatty acid biosynthesis.</text>
</comment>
<comment type="subunit">
    <text evidence="2">May interact with enzymes of the ELO family (including ELOVL1); with those enzymes that mediate condensation, the first of the four steps of the reaction cycle responsible for fatty acids elongation, may be part of a larger fatty acids elongase complex.</text>
</comment>
<comment type="subcellular location">
    <subcellularLocation>
        <location evidence="2">Endoplasmic reticulum membrane</location>
        <topology evidence="2">Multi-pass membrane protein</topology>
    </subcellularLocation>
</comment>
<comment type="alternative products">
    <event type="alternative splicing"/>
    <isoform>
        <id>A2AKM2-1</id>
        <name>1</name>
        <sequence type="displayed"/>
    </isoform>
    <isoform>
        <id>A2AKM2-2</id>
        <name>2</name>
        <sequence type="described" ref="VSP_030124"/>
    </isoform>
</comment>
<comment type="similarity">
    <text evidence="6">Belongs to the very long-chain fatty acids dehydratase HACD family.</text>
</comment>
<comment type="caution">
    <text evidence="2">Shares some similarity with tyrosine phosphatase proteins but it has probably no phosphatase activity.</text>
</comment>
<evidence type="ECO:0000250" key="1">
    <source>
        <dbReference type="UniProtKB" id="P40857"/>
    </source>
</evidence>
<evidence type="ECO:0000250" key="2">
    <source>
        <dbReference type="UniProtKB" id="Q5VWC8"/>
    </source>
</evidence>
<evidence type="ECO:0000250" key="3">
    <source>
        <dbReference type="UniProtKB" id="Q9P035"/>
    </source>
</evidence>
<evidence type="ECO:0000255" key="4"/>
<evidence type="ECO:0000303" key="5">
    <source>
    </source>
</evidence>
<evidence type="ECO:0000305" key="6"/>
<evidence type="ECO:0000312" key="7">
    <source>
        <dbReference type="MGI" id="MGI:1914025"/>
    </source>
</evidence>
<dbReference type="EC" id="4.2.1.134" evidence="3"/>
<dbReference type="EMBL" id="AK016968">
    <property type="protein sequence ID" value="BAB30529.1"/>
    <property type="molecule type" value="mRNA"/>
</dbReference>
<dbReference type="EMBL" id="AK017257">
    <property type="protein sequence ID" value="BAB30656.1"/>
    <property type="molecule type" value="mRNA"/>
</dbReference>
<dbReference type="EMBL" id="AK039344">
    <property type="protein sequence ID" value="BAC30324.1"/>
    <property type="molecule type" value="mRNA"/>
</dbReference>
<dbReference type="EMBL" id="AK039602">
    <property type="protein sequence ID" value="BAC30396.1"/>
    <property type="molecule type" value="mRNA"/>
</dbReference>
<dbReference type="EMBL" id="AK048282">
    <property type="protein sequence ID" value="BAC33294.1"/>
    <property type="molecule type" value="mRNA"/>
</dbReference>
<dbReference type="EMBL" id="AK050927">
    <property type="protein sequence ID" value="BAC34463.1"/>
    <property type="molecule type" value="mRNA"/>
</dbReference>
<dbReference type="EMBL" id="AL772316">
    <property type="status" value="NOT_ANNOTATED_CDS"/>
    <property type="molecule type" value="Genomic_DNA"/>
</dbReference>
<dbReference type="EMBL" id="BC020155">
    <property type="protein sequence ID" value="AAH20155.1"/>
    <property type="molecule type" value="mRNA"/>
</dbReference>
<dbReference type="CCDS" id="CCDS18317.1">
    <molecule id="A2AKM2-1"/>
</dbReference>
<dbReference type="RefSeq" id="NP_001364027.1">
    <molecule id="A2AKM2-1"/>
    <property type="nucleotide sequence ID" value="NM_001377098.1"/>
</dbReference>
<dbReference type="RefSeq" id="NP_001364028.1">
    <molecule id="A2AKM2-1"/>
    <property type="nucleotide sequence ID" value="NM_001377099.1"/>
</dbReference>
<dbReference type="RefSeq" id="NP_080036.1">
    <molecule id="A2AKM2-1"/>
    <property type="nucleotide sequence ID" value="NM_025760.5"/>
</dbReference>
<dbReference type="RefSeq" id="XP_006538252.1">
    <property type="nucleotide sequence ID" value="XM_006538189.3"/>
</dbReference>
<dbReference type="RefSeq" id="XP_006538253.1">
    <molecule id="A2AKM2-1"/>
    <property type="nucleotide sequence ID" value="XM_006538190.4"/>
</dbReference>
<dbReference type="RefSeq" id="XP_006538254.1">
    <property type="nucleotide sequence ID" value="XM_006538191.3"/>
</dbReference>
<dbReference type="FunCoup" id="A2AKM2">
    <property type="interactions" value="443"/>
</dbReference>
<dbReference type="STRING" id="10090.ENSMUSP00000030221"/>
<dbReference type="iPTMnet" id="A2AKM2"/>
<dbReference type="PhosphoSitePlus" id="A2AKM2"/>
<dbReference type="PaxDb" id="10090-ENSMUSP00000119411"/>
<dbReference type="ProteomicsDB" id="269809">
    <molecule id="A2AKM2-1"/>
</dbReference>
<dbReference type="ProteomicsDB" id="269810">
    <molecule id="A2AKM2-2"/>
</dbReference>
<dbReference type="Antibodypedia" id="24843">
    <property type="antibodies" value="26 antibodies from 13 providers"/>
</dbReference>
<dbReference type="DNASU" id="66775"/>
<dbReference type="Ensembl" id="ENSMUST00000030221.3">
    <molecule id="A2AKM2-1"/>
    <property type="protein sequence ID" value="ENSMUSP00000030221.3"/>
    <property type="gene ID" value="ENSMUSG00000028497.13"/>
</dbReference>
<dbReference type="GeneID" id="66775"/>
<dbReference type="KEGG" id="mmu:66775"/>
<dbReference type="UCSC" id="uc008tmx.2">
    <molecule id="A2AKM2-2"/>
    <property type="organism name" value="mouse"/>
</dbReference>
<dbReference type="UCSC" id="uc008tmy.2">
    <molecule id="A2AKM2-1"/>
    <property type="organism name" value="mouse"/>
</dbReference>
<dbReference type="AGR" id="MGI:1914025"/>
<dbReference type="CTD" id="401494"/>
<dbReference type="MGI" id="MGI:1914025">
    <property type="gene designation" value="Hacd4"/>
</dbReference>
<dbReference type="VEuPathDB" id="HostDB:ENSMUSG00000028497"/>
<dbReference type="eggNOG" id="KOG3187">
    <property type="taxonomic scope" value="Eukaryota"/>
</dbReference>
<dbReference type="GeneTree" id="ENSGT00530000062962"/>
<dbReference type="HOGENOM" id="CLU_034302_3_0_1"/>
<dbReference type="InParanoid" id="A2AKM2"/>
<dbReference type="OrthoDB" id="46065at9989"/>
<dbReference type="PhylomeDB" id="A2AKM2"/>
<dbReference type="TreeFam" id="TF313326"/>
<dbReference type="Reactome" id="R-MMU-75876">
    <property type="pathway name" value="Synthesis of very long-chain fatty acyl-CoAs"/>
</dbReference>
<dbReference type="UniPathway" id="UPA00094"/>
<dbReference type="BioGRID-ORCS" id="66775">
    <property type="hits" value="3 hits in 76 CRISPR screens"/>
</dbReference>
<dbReference type="ChiTaRS" id="Hacd4">
    <property type="organism name" value="mouse"/>
</dbReference>
<dbReference type="PRO" id="PR:A2AKM2"/>
<dbReference type="Proteomes" id="UP000000589">
    <property type="component" value="Chromosome 4"/>
</dbReference>
<dbReference type="RNAct" id="A2AKM2">
    <property type="molecule type" value="protein"/>
</dbReference>
<dbReference type="Bgee" id="ENSMUSG00000028497">
    <property type="expression patterns" value="Expressed in granulocyte and 188 other cell types or tissues"/>
</dbReference>
<dbReference type="ExpressionAtlas" id="A2AKM2">
    <property type="expression patterns" value="baseline and differential"/>
</dbReference>
<dbReference type="GO" id="GO:0005783">
    <property type="term" value="C:endoplasmic reticulum"/>
    <property type="evidence" value="ECO:0000250"/>
    <property type="project" value="UniProtKB"/>
</dbReference>
<dbReference type="GO" id="GO:0005789">
    <property type="term" value="C:endoplasmic reticulum membrane"/>
    <property type="evidence" value="ECO:0007669"/>
    <property type="project" value="UniProtKB-SubCell"/>
</dbReference>
<dbReference type="GO" id="GO:0019899">
    <property type="term" value="F:enzyme binding"/>
    <property type="evidence" value="ECO:0000250"/>
    <property type="project" value="UniProtKB"/>
</dbReference>
<dbReference type="GO" id="GO:0102158">
    <property type="term" value="F:very-long-chain (3R)-3-hydroxyacyl-CoA dehydratase activity"/>
    <property type="evidence" value="ECO:0000250"/>
    <property type="project" value="UniProtKB"/>
</dbReference>
<dbReference type="GO" id="GO:0030497">
    <property type="term" value="P:fatty acid elongation"/>
    <property type="evidence" value="ECO:0000250"/>
    <property type="project" value="UniProtKB"/>
</dbReference>
<dbReference type="GO" id="GO:0042761">
    <property type="term" value="P:very long-chain fatty acid biosynthetic process"/>
    <property type="evidence" value="ECO:0000250"/>
    <property type="project" value="UniProtKB"/>
</dbReference>
<dbReference type="InterPro" id="IPR007482">
    <property type="entry name" value="Tyr_Pase-like_PTPLA"/>
</dbReference>
<dbReference type="PANTHER" id="PTHR11035">
    <property type="entry name" value="VERY-LONG-CHAIN (3R)-3-HYDROXYACYL-COA DEHYDRATASE"/>
    <property type="match status" value="1"/>
</dbReference>
<dbReference type="PANTHER" id="PTHR11035:SF16">
    <property type="entry name" value="VERY-LONG-CHAIN (3R)-3-HYDROXYACYL-COA DEHYDRATASE 4"/>
    <property type="match status" value="1"/>
</dbReference>
<dbReference type="Pfam" id="PF04387">
    <property type="entry name" value="PTPLA"/>
    <property type="match status" value="1"/>
</dbReference>
<keyword id="KW-0025">Alternative splicing</keyword>
<keyword id="KW-0256">Endoplasmic reticulum</keyword>
<keyword id="KW-0275">Fatty acid biosynthesis</keyword>
<keyword id="KW-0276">Fatty acid metabolism</keyword>
<keyword id="KW-0444">Lipid biosynthesis</keyword>
<keyword id="KW-0443">Lipid metabolism</keyword>
<keyword id="KW-0456">Lyase</keyword>
<keyword id="KW-0472">Membrane</keyword>
<keyword id="KW-1185">Reference proteome</keyword>
<keyword id="KW-0812">Transmembrane</keyword>
<keyword id="KW-1133">Transmembrane helix</keyword>
<reference key="1">
    <citation type="journal article" date="2005" name="Science">
        <title>The transcriptional landscape of the mammalian genome.</title>
        <authorList>
            <person name="Carninci P."/>
            <person name="Kasukawa T."/>
            <person name="Katayama S."/>
            <person name="Gough J."/>
            <person name="Frith M.C."/>
            <person name="Maeda N."/>
            <person name="Oyama R."/>
            <person name="Ravasi T."/>
            <person name="Lenhard B."/>
            <person name="Wells C."/>
            <person name="Kodzius R."/>
            <person name="Shimokawa K."/>
            <person name="Bajic V.B."/>
            <person name="Brenner S.E."/>
            <person name="Batalov S."/>
            <person name="Forrest A.R."/>
            <person name="Zavolan M."/>
            <person name="Davis M.J."/>
            <person name="Wilming L.G."/>
            <person name="Aidinis V."/>
            <person name="Allen J.E."/>
            <person name="Ambesi-Impiombato A."/>
            <person name="Apweiler R."/>
            <person name="Aturaliya R.N."/>
            <person name="Bailey T.L."/>
            <person name="Bansal M."/>
            <person name="Baxter L."/>
            <person name="Beisel K.W."/>
            <person name="Bersano T."/>
            <person name="Bono H."/>
            <person name="Chalk A.M."/>
            <person name="Chiu K.P."/>
            <person name="Choudhary V."/>
            <person name="Christoffels A."/>
            <person name="Clutterbuck D.R."/>
            <person name="Crowe M.L."/>
            <person name="Dalla E."/>
            <person name="Dalrymple B.P."/>
            <person name="de Bono B."/>
            <person name="Della Gatta G."/>
            <person name="di Bernardo D."/>
            <person name="Down T."/>
            <person name="Engstrom P."/>
            <person name="Fagiolini M."/>
            <person name="Faulkner G."/>
            <person name="Fletcher C.F."/>
            <person name="Fukushima T."/>
            <person name="Furuno M."/>
            <person name="Futaki S."/>
            <person name="Gariboldi M."/>
            <person name="Georgii-Hemming P."/>
            <person name="Gingeras T.R."/>
            <person name="Gojobori T."/>
            <person name="Green R.E."/>
            <person name="Gustincich S."/>
            <person name="Harbers M."/>
            <person name="Hayashi Y."/>
            <person name="Hensch T.K."/>
            <person name="Hirokawa N."/>
            <person name="Hill D."/>
            <person name="Huminiecki L."/>
            <person name="Iacono M."/>
            <person name="Ikeo K."/>
            <person name="Iwama A."/>
            <person name="Ishikawa T."/>
            <person name="Jakt M."/>
            <person name="Kanapin A."/>
            <person name="Katoh M."/>
            <person name="Kawasawa Y."/>
            <person name="Kelso J."/>
            <person name="Kitamura H."/>
            <person name="Kitano H."/>
            <person name="Kollias G."/>
            <person name="Krishnan S.P."/>
            <person name="Kruger A."/>
            <person name="Kummerfeld S.K."/>
            <person name="Kurochkin I.V."/>
            <person name="Lareau L.F."/>
            <person name="Lazarevic D."/>
            <person name="Lipovich L."/>
            <person name="Liu J."/>
            <person name="Liuni S."/>
            <person name="McWilliam S."/>
            <person name="Madan Babu M."/>
            <person name="Madera M."/>
            <person name="Marchionni L."/>
            <person name="Matsuda H."/>
            <person name="Matsuzawa S."/>
            <person name="Miki H."/>
            <person name="Mignone F."/>
            <person name="Miyake S."/>
            <person name="Morris K."/>
            <person name="Mottagui-Tabar S."/>
            <person name="Mulder N."/>
            <person name="Nakano N."/>
            <person name="Nakauchi H."/>
            <person name="Ng P."/>
            <person name="Nilsson R."/>
            <person name="Nishiguchi S."/>
            <person name="Nishikawa S."/>
            <person name="Nori F."/>
            <person name="Ohara O."/>
            <person name="Okazaki Y."/>
            <person name="Orlando V."/>
            <person name="Pang K.C."/>
            <person name="Pavan W.J."/>
            <person name="Pavesi G."/>
            <person name="Pesole G."/>
            <person name="Petrovsky N."/>
            <person name="Piazza S."/>
            <person name="Reed J."/>
            <person name="Reid J.F."/>
            <person name="Ring B.Z."/>
            <person name="Ringwald M."/>
            <person name="Rost B."/>
            <person name="Ruan Y."/>
            <person name="Salzberg S.L."/>
            <person name="Sandelin A."/>
            <person name="Schneider C."/>
            <person name="Schoenbach C."/>
            <person name="Sekiguchi K."/>
            <person name="Semple C.A."/>
            <person name="Seno S."/>
            <person name="Sessa L."/>
            <person name="Sheng Y."/>
            <person name="Shibata Y."/>
            <person name="Shimada H."/>
            <person name="Shimada K."/>
            <person name="Silva D."/>
            <person name="Sinclair B."/>
            <person name="Sperling S."/>
            <person name="Stupka E."/>
            <person name="Sugiura K."/>
            <person name="Sultana R."/>
            <person name="Takenaka Y."/>
            <person name="Taki K."/>
            <person name="Tammoja K."/>
            <person name="Tan S.L."/>
            <person name="Tang S."/>
            <person name="Taylor M.S."/>
            <person name="Tegner J."/>
            <person name="Teichmann S.A."/>
            <person name="Ueda H.R."/>
            <person name="van Nimwegen E."/>
            <person name="Verardo R."/>
            <person name="Wei C.L."/>
            <person name="Yagi K."/>
            <person name="Yamanishi H."/>
            <person name="Zabarovsky E."/>
            <person name="Zhu S."/>
            <person name="Zimmer A."/>
            <person name="Hide W."/>
            <person name="Bult C."/>
            <person name="Grimmond S.M."/>
            <person name="Teasdale R.D."/>
            <person name="Liu E.T."/>
            <person name="Brusic V."/>
            <person name="Quackenbush J."/>
            <person name="Wahlestedt C."/>
            <person name="Mattick J.S."/>
            <person name="Hume D.A."/>
            <person name="Kai C."/>
            <person name="Sasaki D."/>
            <person name="Tomaru Y."/>
            <person name="Fukuda S."/>
            <person name="Kanamori-Katayama M."/>
            <person name="Suzuki M."/>
            <person name="Aoki J."/>
            <person name="Arakawa T."/>
            <person name="Iida J."/>
            <person name="Imamura K."/>
            <person name="Itoh M."/>
            <person name="Kato T."/>
            <person name="Kawaji H."/>
            <person name="Kawagashira N."/>
            <person name="Kawashima T."/>
            <person name="Kojima M."/>
            <person name="Kondo S."/>
            <person name="Konno H."/>
            <person name="Nakano K."/>
            <person name="Ninomiya N."/>
            <person name="Nishio T."/>
            <person name="Okada M."/>
            <person name="Plessy C."/>
            <person name="Shibata K."/>
            <person name="Shiraki T."/>
            <person name="Suzuki S."/>
            <person name="Tagami M."/>
            <person name="Waki K."/>
            <person name="Watahiki A."/>
            <person name="Okamura-Oho Y."/>
            <person name="Suzuki H."/>
            <person name="Kawai J."/>
            <person name="Hayashizaki Y."/>
        </authorList>
    </citation>
    <scope>NUCLEOTIDE SEQUENCE [LARGE SCALE MRNA] (ISOFORMS 1 AND 2)</scope>
    <source>
        <strain>C57BL/6J</strain>
        <tissue>Head</tissue>
        <tissue>Spinal cord</tissue>
        <tissue>Testis</tissue>
    </source>
</reference>
<reference key="2">
    <citation type="journal article" date="2009" name="PLoS Biol.">
        <title>Lineage-specific biology revealed by a finished genome assembly of the mouse.</title>
        <authorList>
            <person name="Church D.M."/>
            <person name="Goodstadt L."/>
            <person name="Hillier L.W."/>
            <person name="Zody M.C."/>
            <person name="Goldstein S."/>
            <person name="She X."/>
            <person name="Bult C.J."/>
            <person name="Agarwala R."/>
            <person name="Cherry J.L."/>
            <person name="DiCuccio M."/>
            <person name="Hlavina W."/>
            <person name="Kapustin Y."/>
            <person name="Meric P."/>
            <person name="Maglott D."/>
            <person name="Birtle Z."/>
            <person name="Marques A.C."/>
            <person name="Graves T."/>
            <person name="Zhou S."/>
            <person name="Teague B."/>
            <person name="Potamousis K."/>
            <person name="Churas C."/>
            <person name="Place M."/>
            <person name="Herschleb J."/>
            <person name="Runnheim R."/>
            <person name="Forrest D."/>
            <person name="Amos-Landgraf J."/>
            <person name="Schwartz D.C."/>
            <person name="Cheng Z."/>
            <person name="Lindblad-Toh K."/>
            <person name="Eichler E.E."/>
            <person name="Ponting C.P."/>
        </authorList>
    </citation>
    <scope>NUCLEOTIDE SEQUENCE [LARGE SCALE GENOMIC DNA]</scope>
    <source>
        <strain>C57BL/6J</strain>
    </source>
</reference>
<reference key="3">
    <citation type="journal article" date="2004" name="Genome Res.">
        <title>The status, quality, and expansion of the NIH full-length cDNA project: the Mammalian Gene Collection (MGC).</title>
        <authorList>
            <consortium name="The MGC Project Team"/>
        </authorList>
    </citation>
    <scope>NUCLEOTIDE SEQUENCE [LARGE SCALE MRNA] (ISOFORM 1)</scope>
    <source>
        <strain>Czech II</strain>
        <tissue>Mammary tumor</tissue>
    </source>
</reference>
<proteinExistence type="evidence at transcript level"/>